<organism>
    <name type="scientific">Arabidopsis thaliana</name>
    <name type="common">Mouse-ear cress</name>
    <dbReference type="NCBI Taxonomy" id="3702"/>
    <lineage>
        <taxon>Eukaryota</taxon>
        <taxon>Viridiplantae</taxon>
        <taxon>Streptophyta</taxon>
        <taxon>Embryophyta</taxon>
        <taxon>Tracheophyta</taxon>
        <taxon>Spermatophyta</taxon>
        <taxon>Magnoliopsida</taxon>
        <taxon>eudicotyledons</taxon>
        <taxon>Gunneridae</taxon>
        <taxon>Pentapetalae</taxon>
        <taxon>rosids</taxon>
        <taxon>malvids</taxon>
        <taxon>Brassicales</taxon>
        <taxon>Brassicaceae</taxon>
        <taxon>Camelineae</taxon>
        <taxon>Arabidopsis</taxon>
    </lineage>
</organism>
<dbReference type="EMBL" id="AL353013">
    <property type="protein sequence ID" value="CAB88255.1"/>
    <property type="molecule type" value="Genomic_DNA"/>
</dbReference>
<dbReference type="EMBL" id="CP002688">
    <property type="protein sequence ID" value="AED91828.1"/>
    <property type="molecule type" value="Genomic_DNA"/>
</dbReference>
<dbReference type="PIR" id="T49905">
    <property type="entry name" value="T49905"/>
</dbReference>
<dbReference type="RefSeq" id="NP_196795.1">
    <property type="nucleotide sequence ID" value="NM_121294.1"/>
</dbReference>
<dbReference type="SMR" id="Q9LXU8"/>
<dbReference type="BioGRID" id="16409">
    <property type="interactions" value="8"/>
</dbReference>
<dbReference type="FunCoup" id="Q9LXU8">
    <property type="interactions" value="4"/>
</dbReference>
<dbReference type="STRING" id="3702.Q9LXU8"/>
<dbReference type="PaxDb" id="3702-AT5G12910.1"/>
<dbReference type="EnsemblPlants" id="AT5G12910.1">
    <property type="protein sequence ID" value="AT5G12910.1"/>
    <property type="gene ID" value="AT5G12910"/>
</dbReference>
<dbReference type="GeneID" id="831131"/>
<dbReference type="Gramene" id="AT5G12910.1">
    <property type="protein sequence ID" value="AT5G12910.1"/>
    <property type="gene ID" value="AT5G12910"/>
</dbReference>
<dbReference type="KEGG" id="ath:AT5G12910"/>
<dbReference type="Araport" id="AT5G12910"/>
<dbReference type="TAIR" id="AT5G12910"/>
<dbReference type="eggNOG" id="KOG1745">
    <property type="taxonomic scope" value="Eukaryota"/>
</dbReference>
<dbReference type="HOGENOM" id="CLU_078295_4_0_1"/>
<dbReference type="InParanoid" id="Q9LXU8"/>
<dbReference type="OMA" id="EDGPNRW"/>
<dbReference type="OrthoDB" id="1854097at2759"/>
<dbReference type="PhylomeDB" id="Q9LXU8"/>
<dbReference type="PRO" id="PR:Q9LXU8"/>
<dbReference type="Proteomes" id="UP000006548">
    <property type="component" value="Chromosome 5"/>
</dbReference>
<dbReference type="ExpressionAtlas" id="Q9LXU8">
    <property type="expression patterns" value="baseline and differential"/>
</dbReference>
<dbReference type="GO" id="GO:0000786">
    <property type="term" value="C:nucleosome"/>
    <property type="evidence" value="ECO:0007669"/>
    <property type="project" value="UniProtKB-KW"/>
</dbReference>
<dbReference type="GO" id="GO:0005634">
    <property type="term" value="C:nucleus"/>
    <property type="evidence" value="ECO:0007669"/>
    <property type="project" value="UniProtKB-SubCell"/>
</dbReference>
<dbReference type="GO" id="GO:0003677">
    <property type="term" value="F:DNA binding"/>
    <property type="evidence" value="ECO:0007669"/>
    <property type="project" value="UniProtKB-KW"/>
</dbReference>
<dbReference type="GO" id="GO:0046982">
    <property type="term" value="F:protein heterodimerization activity"/>
    <property type="evidence" value="ECO:0007669"/>
    <property type="project" value="InterPro"/>
</dbReference>
<dbReference type="GO" id="GO:0030527">
    <property type="term" value="F:structural constituent of chromatin"/>
    <property type="evidence" value="ECO:0007669"/>
    <property type="project" value="InterPro"/>
</dbReference>
<dbReference type="CDD" id="cd22911">
    <property type="entry name" value="HFD_H3"/>
    <property type="match status" value="1"/>
</dbReference>
<dbReference type="FunFam" id="1.10.20.10:FF:000096">
    <property type="entry name" value="Histone H3"/>
    <property type="match status" value="1"/>
</dbReference>
<dbReference type="Gene3D" id="1.10.20.10">
    <property type="entry name" value="Histone, subunit A"/>
    <property type="match status" value="1"/>
</dbReference>
<dbReference type="InterPro" id="IPR009072">
    <property type="entry name" value="Histone-fold"/>
</dbReference>
<dbReference type="InterPro" id="IPR007125">
    <property type="entry name" value="Histone_H2A/H2B/H3"/>
</dbReference>
<dbReference type="InterPro" id="IPR000164">
    <property type="entry name" value="Histone_H3/CENP-A"/>
</dbReference>
<dbReference type="PANTHER" id="PTHR11426">
    <property type="entry name" value="HISTONE H3"/>
    <property type="match status" value="1"/>
</dbReference>
<dbReference type="Pfam" id="PF00125">
    <property type="entry name" value="Histone"/>
    <property type="match status" value="1"/>
</dbReference>
<dbReference type="PRINTS" id="PR00622">
    <property type="entry name" value="HISTONEH3"/>
</dbReference>
<dbReference type="SMART" id="SM00428">
    <property type="entry name" value="H3"/>
    <property type="match status" value="1"/>
</dbReference>
<dbReference type="SUPFAM" id="SSF47113">
    <property type="entry name" value="Histone-fold"/>
    <property type="match status" value="1"/>
</dbReference>
<dbReference type="PROSITE" id="PS00959">
    <property type="entry name" value="HISTONE_H3_2"/>
    <property type="match status" value="1"/>
</dbReference>
<gene>
    <name type="ordered locus">At5g12910</name>
    <name type="ORF">T24H18.80</name>
</gene>
<feature type="chain" id="PRO_0000264608" description="Histone H3-like 4">
    <location>
        <begin position="1"/>
        <end position="131"/>
    </location>
</feature>
<feature type="modified residue" description="N6,N6,N6-trimethyllysine; alternate" evidence="2">
    <location>
        <position position="10"/>
    </location>
</feature>
<feature type="modified residue" description="N6,N6-dimethyllysine; alternate" evidence="2">
    <location>
        <position position="10"/>
    </location>
</feature>
<feature type="modified residue" description="N6-acetyllysine; alternate" evidence="2">
    <location>
        <position position="10"/>
    </location>
</feature>
<feature type="modified residue" description="N6-methyllysine; alternate" evidence="2">
    <location>
        <position position="10"/>
    </location>
</feature>
<feature type="modified residue" description="Phosphothreonine" evidence="2">
    <location>
        <position position="12"/>
    </location>
</feature>
<feature type="modified residue" description="N6-acetyllysine" evidence="2">
    <location>
        <position position="15"/>
    </location>
</feature>
<feature type="modified residue" description="Phosphoserine" evidence="2">
    <location>
        <position position="27"/>
    </location>
</feature>
<feature type="modified residue" description="N6,N6,N6-trimethyllysine; alternate" evidence="2">
    <location>
        <position position="32"/>
    </location>
</feature>
<feature type="modified residue" description="N6,N6-dimethyllysine; alternate" evidence="2">
    <location>
        <position position="32"/>
    </location>
</feature>
<feature type="modified residue" description="N6-methyllysine; alternate" evidence="2">
    <location>
        <position position="32"/>
    </location>
</feature>
<accession>Q9LXU8</accession>
<keyword id="KW-0007">Acetylation</keyword>
<keyword id="KW-0158">Chromosome</keyword>
<keyword id="KW-0238">DNA-binding</keyword>
<keyword id="KW-0488">Methylation</keyword>
<keyword id="KW-0544">Nucleosome core</keyword>
<keyword id="KW-0539">Nucleus</keyword>
<keyword id="KW-0597">Phosphoprotein</keyword>
<keyword id="KW-1185">Reference proteome</keyword>
<proteinExistence type="evidence at transcript level"/>
<protein>
    <recommendedName>
        <fullName>Histone H3-like 4</fullName>
    </recommendedName>
</protein>
<sequence length="131" mass="14912">MARSNQTARKATGGKAPHFAMRVWQHSTPPLKKPYRYKPGTVALREIRKYQKTTDLVIRKLPFQRLVKEIAQSLKADLRFQTGAVSALQEAAEAFMVGMFEDTNLCAMHAKRSTIMPKDIQLAKRLRGDRV</sequence>
<comment type="function">
    <text evidence="1">Core component of nucleosome. Nucleosomes wrap and compact DNA into chromatin, limiting DNA accessibility to the cellular machineries which require DNA as a template. Histones thereby play a central role in transcription regulation, DNA repair, DNA replication and chromosomal stability. DNA accessibility is regulated via a complex set of post-translational modifications of histones, also called histone code, and nucleosome remodeling (By similarity).</text>
</comment>
<comment type="subunit">
    <text evidence="1">The nucleosome is a histone octamer containing two molecules each of H2A, H2B, H3 and H4 assembled in one H3-H4 heterotetramer and two H2A-H2B heterodimers. The octamer wraps approximately 147 bp of DNA (By similarity).</text>
</comment>
<comment type="subcellular location">
    <subcellularLocation>
        <location evidence="1">Nucleus</location>
    </subcellularLocation>
    <subcellularLocation>
        <location evidence="1">Chromosome</location>
    </subcellularLocation>
</comment>
<comment type="tissue specificity">
    <text evidence="3">Expressed in roots, seedlings, leaves buds and open flowers.</text>
</comment>
<comment type="similarity">
    <text evidence="4">Belongs to the histone H3 family.</text>
</comment>
<reference key="1">
    <citation type="journal article" date="2000" name="Nature">
        <title>Sequence and analysis of chromosome 5 of the plant Arabidopsis thaliana.</title>
        <authorList>
            <person name="Tabata S."/>
            <person name="Kaneko T."/>
            <person name="Nakamura Y."/>
            <person name="Kotani H."/>
            <person name="Kato T."/>
            <person name="Asamizu E."/>
            <person name="Miyajima N."/>
            <person name="Sasamoto S."/>
            <person name="Kimura T."/>
            <person name="Hosouchi T."/>
            <person name="Kawashima K."/>
            <person name="Kohara M."/>
            <person name="Matsumoto M."/>
            <person name="Matsuno A."/>
            <person name="Muraki A."/>
            <person name="Nakayama S."/>
            <person name="Nakazaki N."/>
            <person name="Naruo K."/>
            <person name="Okumura S."/>
            <person name="Shinpo S."/>
            <person name="Takeuchi C."/>
            <person name="Wada T."/>
            <person name="Watanabe A."/>
            <person name="Yamada M."/>
            <person name="Yasuda M."/>
            <person name="Sato S."/>
            <person name="de la Bastide M."/>
            <person name="Huang E."/>
            <person name="Spiegel L."/>
            <person name="Gnoj L."/>
            <person name="O'Shaughnessy A."/>
            <person name="Preston R."/>
            <person name="Habermann K."/>
            <person name="Murray J."/>
            <person name="Johnson D."/>
            <person name="Rohlfing T."/>
            <person name="Nelson J."/>
            <person name="Stoneking T."/>
            <person name="Pepin K."/>
            <person name="Spieth J."/>
            <person name="Sekhon M."/>
            <person name="Armstrong J."/>
            <person name="Becker M."/>
            <person name="Belter E."/>
            <person name="Cordum H."/>
            <person name="Cordes M."/>
            <person name="Courtney L."/>
            <person name="Courtney W."/>
            <person name="Dante M."/>
            <person name="Du H."/>
            <person name="Edwards J."/>
            <person name="Fryman J."/>
            <person name="Haakensen B."/>
            <person name="Lamar E."/>
            <person name="Latreille P."/>
            <person name="Leonard S."/>
            <person name="Meyer R."/>
            <person name="Mulvaney E."/>
            <person name="Ozersky P."/>
            <person name="Riley A."/>
            <person name="Strowmatt C."/>
            <person name="Wagner-McPherson C."/>
            <person name="Wollam A."/>
            <person name="Yoakum M."/>
            <person name="Bell M."/>
            <person name="Dedhia N."/>
            <person name="Parnell L."/>
            <person name="Shah R."/>
            <person name="Rodriguez M."/>
            <person name="Hoon See L."/>
            <person name="Vil D."/>
            <person name="Baker J."/>
            <person name="Kirchoff K."/>
            <person name="Toth K."/>
            <person name="King L."/>
            <person name="Bahret A."/>
            <person name="Miller B."/>
            <person name="Marra M.A."/>
            <person name="Martienssen R."/>
            <person name="McCombie W.R."/>
            <person name="Wilson R.K."/>
            <person name="Murphy G."/>
            <person name="Bancroft I."/>
            <person name="Volckaert G."/>
            <person name="Wambutt R."/>
            <person name="Duesterhoeft A."/>
            <person name="Stiekema W."/>
            <person name="Pohl T."/>
            <person name="Entian K.-D."/>
            <person name="Terryn N."/>
            <person name="Hartley N."/>
            <person name="Bent E."/>
            <person name="Johnson S."/>
            <person name="Langham S.-A."/>
            <person name="McCullagh B."/>
            <person name="Robben J."/>
            <person name="Grymonprez B."/>
            <person name="Zimmermann W."/>
            <person name="Ramsperger U."/>
            <person name="Wedler H."/>
            <person name="Balke K."/>
            <person name="Wedler E."/>
            <person name="Peters S."/>
            <person name="van Staveren M."/>
            <person name="Dirkse W."/>
            <person name="Mooijman P."/>
            <person name="Klein Lankhorst R."/>
            <person name="Weitzenegger T."/>
            <person name="Bothe G."/>
            <person name="Rose M."/>
            <person name="Hauf J."/>
            <person name="Berneiser S."/>
            <person name="Hempel S."/>
            <person name="Feldpausch M."/>
            <person name="Lamberth S."/>
            <person name="Villarroel R."/>
            <person name="Gielen J."/>
            <person name="Ardiles W."/>
            <person name="Bents O."/>
            <person name="Lemcke K."/>
            <person name="Kolesov G."/>
            <person name="Mayer K.F.X."/>
            <person name="Rudd S."/>
            <person name="Schoof H."/>
            <person name="Schueller C."/>
            <person name="Zaccaria P."/>
            <person name="Mewes H.-W."/>
            <person name="Bevan M."/>
            <person name="Fransz P.F."/>
        </authorList>
    </citation>
    <scope>NUCLEOTIDE SEQUENCE [LARGE SCALE GENOMIC DNA]</scope>
    <source>
        <strain>cv. Columbia</strain>
    </source>
</reference>
<reference key="2">
    <citation type="journal article" date="2017" name="Plant J.">
        <title>Araport11: a complete reannotation of the Arabidopsis thaliana reference genome.</title>
        <authorList>
            <person name="Cheng C.Y."/>
            <person name="Krishnakumar V."/>
            <person name="Chan A.P."/>
            <person name="Thibaud-Nissen F."/>
            <person name="Schobel S."/>
            <person name="Town C.D."/>
        </authorList>
    </citation>
    <scope>GENOME REANNOTATION</scope>
    <source>
        <strain>cv. Columbia</strain>
    </source>
</reference>
<reference key="3">
    <citation type="journal article" date="2005" name="Plant J.">
        <title>Analysis of the histone H3 gene family in Arabidopsis and identification of the male-gamete-specific variant AtMGH3.</title>
        <authorList>
            <person name="Okada T."/>
            <person name="Endo M."/>
            <person name="Singh M.B."/>
            <person name="Bhalla P.L."/>
        </authorList>
    </citation>
    <scope>IDENTIFICATION</scope>
    <scope>TISSUE SPECIFICITY</scope>
</reference>
<evidence type="ECO:0000250" key="1"/>
<evidence type="ECO:0000250" key="2">
    <source>
        <dbReference type="UniProtKB" id="P59226"/>
    </source>
</evidence>
<evidence type="ECO:0000269" key="3">
    <source>
    </source>
</evidence>
<evidence type="ECO:0000305" key="4"/>
<name>H3L4_ARATH</name>